<name>TM104_CHICK</name>
<feature type="chain" id="PRO_0000254181" description="Transmembrane protein 104">
    <location>
        <begin position="1"/>
        <end position="497"/>
    </location>
</feature>
<feature type="topological domain" description="Cytoplasmic" evidence="1">
    <location>
        <begin position="1"/>
        <end position="10"/>
    </location>
</feature>
<feature type="transmembrane region" description="Helical" evidence="1">
    <location>
        <begin position="11"/>
        <end position="31"/>
    </location>
</feature>
<feature type="topological domain" description="Extracellular" evidence="1">
    <location>
        <begin position="32"/>
        <end position="35"/>
    </location>
</feature>
<feature type="transmembrane region" description="Helical" evidence="1">
    <location>
        <begin position="36"/>
        <end position="56"/>
    </location>
</feature>
<feature type="topological domain" description="Cytoplasmic" evidence="1">
    <location>
        <begin position="57"/>
        <end position="148"/>
    </location>
</feature>
<feature type="transmembrane region" description="Helical" evidence="1">
    <location>
        <begin position="149"/>
        <end position="169"/>
    </location>
</feature>
<feature type="topological domain" description="Extracellular" evidence="1">
    <location>
        <begin position="170"/>
        <end position="205"/>
    </location>
</feature>
<feature type="transmembrane region" description="Helical" evidence="1">
    <location>
        <begin position="206"/>
        <end position="226"/>
    </location>
</feature>
<feature type="topological domain" description="Cytoplasmic" evidence="1">
    <location>
        <begin position="227"/>
        <end position="234"/>
    </location>
</feature>
<feature type="transmembrane region" description="Helical" evidence="1">
    <location>
        <begin position="235"/>
        <end position="255"/>
    </location>
</feature>
<feature type="topological domain" description="Extracellular" evidence="1">
    <location>
        <begin position="256"/>
        <end position="277"/>
    </location>
</feature>
<feature type="transmembrane region" description="Helical" evidence="1">
    <location>
        <begin position="278"/>
        <end position="298"/>
    </location>
</feature>
<feature type="topological domain" description="Cytoplasmic" evidence="1">
    <location>
        <begin position="299"/>
        <end position="306"/>
    </location>
</feature>
<feature type="transmembrane region" description="Helical" evidence="1">
    <location>
        <begin position="307"/>
        <end position="327"/>
    </location>
</feature>
<feature type="topological domain" description="Extracellular" evidence="1">
    <location>
        <begin position="328"/>
        <end position="356"/>
    </location>
</feature>
<feature type="transmembrane region" description="Helical" evidence="1">
    <location>
        <begin position="357"/>
        <end position="377"/>
    </location>
</feature>
<feature type="topological domain" description="Cytoplasmic" evidence="1">
    <location>
        <begin position="378"/>
        <end position="398"/>
    </location>
</feature>
<feature type="transmembrane region" description="Helical" evidence="1">
    <location>
        <begin position="399"/>
        <end position="419"/>
    </location>
</feature>
<feature type="topological domain" description="Extracellular" evidence="1">
    <location>
        <begin position="420"/>
        <end position="421"/>
    </location>
</feature>
<feature type="transmembrane region" description="Helical" evidence="1">
    <location>
        <begin position="422"/>
        <end position="442"/>
    </location>
</feature>
<feature type="topological domain" description="Cytoplasmic" evidence="1">
    <location>
        <begin position="443"/>
        <end position="471"/>
    </location>
</feature>
<feature type="transmembrane region" description="Helical" evidence="1">
    <location>
        <begin position="472"/>
        <end position="492"/>
    </location>
</feature>
<feature type="topological domain" description="Extracellular" evidence="1">
    <location>
        <begin position="493"/>
        <end position="497"/>
    </location>
</feature>
<feature type="glycosylation site" description="N-linked (GlcNAc...) asparagine" evidence="1">
    <location>
        <position position="194"/>
    </location>
</feature>
<gene>
    <name type="primary">TMEM104</name>
    <name type="ORF">RCJMB04_15p16</name>
</gene>
<protein>
    <recommendedName>
        <fullName>Transmembrane protein 104</fullName>
    </recommendedName>
</protein>
<dbReference type="EMBL" id="AJ851664">
    <property type="protein sequence ID" value="CAH65298.1"/>
    <property type="molecule type" value="mRNA"/>
</dbReference>
<dbReference type="RefSeq" id="NP_001026278.1">
    <property type="nucleotide sequence ID" value="NM_001031107.1"/>
</dbReference>
<dbReference type="FunCoup" id="Q5F3I6">
    <property type="interactions" value="1236"/>
</dbReference>
<dbReference type="STRING" id="9031.ENSGALP00000060661"/>
<dbReference type="GlyCosmos" id="Q5F3I6">
    <property type="glycosylation" value="1 site, No reported glycans"/>
</dbReference>
<dbReference type="GlyGen" id="Q5F3I6">
    <property type="glycosylation" value="1 site"/>
</dbReference>
<dbReference type="PaxDb" id="9031-ENSGALP00000012546"/>
<dbReference type="GeneID" id="422110"/>
<dbReference type="KEGG" id="gga:422110"/>
<dbReference type="CTD" id="54868"/>
<dbReference type="VEuPathDB" id="HostDB:geneid_422110"/>
<dbReference type="eggNOG" id="KOG3832">
    <property type="taxonomic scope" value="Eukaryota"/>
</dbReference>
<dbReference type="InParanoid" id="Q5F3I6"/>
<dbReference type="OrthoDB" id="294541at2759"/>
<dbReference type="PhylomeDB" id="Q5F3I6"/>
<dbReference type="PRO" id="PR:Q5F3I6"/>
<dbReference type="Proteomes" id="UP000000539">
    <property type="component" value="Unassembled WGS sequence"/>
</dbReference>
<dbReference type="GO" id="GO:0016020">
    <property type="term" value="C:membrane"/>
    <property type="evidence" value="ECO:0007669"/>
    <property type="project" value="UniProtKB-SubCell"/>
</dbReference>
<dbReference type="InterPro" id="IPR013057">
    <property type="entry name" value="AA_transpt_TM"/>
</dbReference>
<dbReference type="PANTHER" id="PTHR16189:SF0">
    <property type="entry name" value="TRANSMEMBRANE PROTEIN 104"/>
    <property type="match status" value="1"/>
</dbReference>
<dbReference type="PANTHER" id="PTHR16189">
    <property type="entry name" value="TRANSMEMBRANE PROTEIN 104-RELATED"/>
    <property type="match status" value="1"/>
</dbReference>
<dbReference type="Pfam" id="PF01490">
    <property type="entry name" value="Aa_trans"/>
    <property type="match status" value="2"/>
</dbReference>
<proteinExistence type="evidence at transcript level"/>
<reference key="1">
    <citation type="journal article" date="2005" name="Genome Biol.">
        <title>Full-length cDNAs from chicken bursal lymphocytes to facilitate gene function analysis.</title>
        <authorList>
            <person name="Caldwell R.B."/>
            <person name="Kierzek A.M."/>
            <person name="Arakawa H."/>
            <person name="Bezzubov Y."/>
            <person name="Zaim J."/>
            <person name="Fiedler P."/>
            <person name="Kutter S."/>
            <person name="Blagodatski A."/>
            <person name="Kostovska D."/>
            <person name="Koter M."/>
            <person name="Plachy J."/>
            <person name="Carninci P."/>
            <person name="Hayashizaki Y."/>
            <person name="Buerstedde J.-M."/>
        </authorList>
    </citation>
    <scope>NUCLEOTIDE SEQUENCE [LARGE SCALE MRNA]</scope>
    <source>
        <strain>CB</strain>
        <tissue>Bursa of Fabricius</tissue>
    </source>
</reference>
<evidence type="ECO:0000255" key="1"/>
<evidence type="ECO:0000305" key="2"/>
<accession>Q5F3I6</accession>
<keyword id="KW-0325">Glycoprotein</keyword>
<keyword id="KW-0472">Membrane</keyword>
<keyword id="KW-1185">Reference proteome</keyword>
<keyword id="KW-0812">Transmembrane</keyword>
<keyword id="KW-1133">Transmembrane helix</keyword>
<organism>
    <name type="scientific">Gallus gallus</name>
    <name type="common">Chicken</name>
    <dbReference type="NCBI Taxonomy" id="9031"/>
    <lineage>
        <taxon>Eukaryota</taxon>
        <taxon>Metazoa</taxon>
        <taxon>Chordata</taxon>
        <taxon>Craniata</taxon>
        <taxon>Vertebrata</taxon>
        <taxon>Euteleostomi</taxon>
        <taxon>Archelosauria</taxon>
        <taxon>Archosauria</taxon>
        <taxon>Dinosauria</taxon>
        <taxon>Saurischia</taxon>
        <taxon>Theropoda</taxon>
        <taxon>Coelurosauria</taxon>
        <taxon>Aves</taxon>
        <taxon>Neognathae</taxon>
        <taxon>Galloanserae</taxon>
        <taxon>Galliformes</taxon>
        <taxon>Phasianidae</taxon>
        <taxon>Phasianinae</taxon>
        <taxon>Gallus</taxon>
    </lineage>
</organism>
<sequence>MAGGITDTGELYSPYVGLVYMFNLIVGTGALTMPKAFATAGWLVSLVLLMFLGFMSYMTTTFVVEAMAAANAQLRWKRMEKRKEDDEDEDSSSGVSDSDVLLRDSYERAETRPILSVQRRGSPNIFEITERVEMGQMASMFFNKVGVNLFYFCIIIYLYGDLAIYAAAVPVSLMQVTCAIGNHSCNVGDGTKYNDTDKCWGPIRRIDAYRLYLAAFTLLLGPFTFFNVQKTKYLQIMTSLMRWIAFILMIILALIRISRGQAEGHPSMAQLSGIRNLFGVCVYSFMCQHSLPSLITPISKKRHVNKLVLLDYILILAFYSLLSFTAIYCFRNDTLMDMYTLNFTNCEIINVAFIRYFLGLFPVFTISTNFPIIAVTLRNNWKTLFHREGGTYPWLVDRIVFPAITLVPPVLVVFCTHDLESLVGITGAYAGNGIQYLIPAFLAYCSRKDTQLVFGSGTVNKHLSPFRHTFWIVFVLIWGFSCFVFVTANIVLSESKL</sequence>
<comment type="subcellular location">
    <subcellularLocation>
        <location evidence="2">Membrane</location>
        <topology evidence="2">Multi-pass membrane protein</topology>
    </subcellularLocation>
</comment>
<comment type="similarity">
    <text evidence="2">Belongs to the TMEM104 family.</text>
</comment>